<accession>Q5FTZ9</accession>
<evidence type="ECO:0000255" key="1">
    <source>
        <dbReference type="HAMAP-Rule" id="MF_01337"/>
    </source>
</evidence>
<evidence type="ECO:0000305" key="2"/>
<gene>
    <name evidence="1" type="primary">rplR</name>
    <name type="ordered locus">GOX0364</name>
</gene>
<reference key="1">
    <citation type="journal article" date="2005" name="Nat. Biotechnol.">
        <title>Complete genome sequence of the acetic acid bacterium Gluconobacter oxydans.</title>
        <authorList>
            <person name="Prust C."/>
            <person name="Hoffmeister M."/>
            <person name="Liesegang H."/>
            <person name="Wiezer A."/>
            <person name="Fricke W.F."/>
            <person name="Ehrenreich A."/>
            <person name="Gottschalk G."/>
            <person name="Deppenmeier U."/>
        </authorList>
    </citation>
    <scope>NUCLEOTIDE SEQUENCE [LARGE SCALE GENOMIC DNA]</scope>
    <source>
        <strain>621H</strain>
    </source>
</reference>
<protein>
    <recommendedName>
        <fullName evidence="1">Large ribosomal subunit protein uL18</fullName>
    </recommendedName>
    <alternativeName>
        <fullName evidence="2">50S ribosomal protein L18</fullName>
    </alternativeName>
</protein>
<dbReference type="EMBL" id="CP000009">
    <property type="protein sequence ID" value="AAW60147.1"/>
    <property type="molecule type" value="Genomic_DNA"/>
</dbReference>
<dbReference type="RefSeq" id="WP_011251950.1">
    <property type="nucleotide sequence ID" value="NZ_LT900338.1"/>
</dbReference>
<dbReference type="SMR" id="Q5FTZ9"/>
<dbReference type="STRING" id="290633.GOX0364"/>
<dbReference type="GeneID" id="56904630"/>
<dbReference type="KEGG" id="gox:GOX0364"/>
<dbReference type="eggNOG" id="COG0256">
    <property type="taxonomic scope" value="Bacteria"/>
</dbReference>
<dbReference type="HOGENOM" id="CLU_098841_0_1_5"/>
<dbReference type="Proteomes" id="UP000006375">
    <property type="component" value="Chromosome"/>
</dbReference>
<dbReference type="GO" id="GO:0022625">
    <property type="term" value="C:cytosolic large ribosomal subunit"/>
    <property type="evidence" value="ECO:0007669"/>
    <property type="project" value="TreeGrafter"/>
</dbReference>
<dbReference type="GO" id="GO:0008097">
    <property type="term" value="F:5S rRNA binding"/>
    <property type="evidence" value="ECO:0007669"/>
    <property type="project" value="TreeGrafter"/>
</dbReference>
<dbReference type="GO" id="GO:0003735">
    <property type="term" value="F:structural constituent of ribosome"/>
    <property type="evidence" value="ECO:0007669"/>
    <property type="project" value="InterPro"/>
</dbReference>
<dbReference type="GO" id="GO:0006412">
    <property type="term" value="P:translation"/>
    <property type="evidence" value="ECO:0007669"/>
    <property type="project" value="UniProtKB-UniRule"/>
</dbReference>
<dbReference type="CDD" id="cd00432">
    <property type="entry name" value="Ribosomal_L18_L5e"/>
    <property type="match status" value="1"/>
</dbReference>
<dbReference type="FunFam" id="3.30.420.100:FF:000001">
    <property type="entry name" value="50S ribosomal protein L18"/>
    <property type="match status" value="1"/>
</dbReference>
<dbReference type="Gene3D" id="3.30.420.100">
    <property type="match status" value="1"/>
</dbReference>
<dbReference type="HAMAP" id="MF_01337_B">
    <property type="entry name" value="Ribosomal_uL18_B"/>
    <property type="match status" value="1"/>
</dbReference>
<dbReference type="InterPro" id="IPR004389">
    <property type="entry name" value="Ribosomal_uL18_bac-type"/>
</dbReference>
<dbReference type="InterPro" id="IPR005484">
    <property type="entry name" value="Ribosomal_uL18_bac/euk"/>
</dbReference>
<dbReference type="NCBIfam" id="TIGR00060">
    <property type="entry name" value="L18_bact"/>
    <property type="match status" value="1"/>
</dbReference>
<dbReference type="PANTHER" id="PTHR12899">
    <property type="entry name" value="39S RIBOSOMAL PROTEIN L18, MITOCHONDRIAL"/>
    <property type="match status" value="1"/>
</dbReference>
<dbReference type="PANTHER" id="PTHR12899:SF3">
    <property type="entry name" value="LARGE RIBOSOMAL SUBUNIT PROTEIN UL18M"/>
    <property type="match status" value="1"/>
</dbReference>
<dbReference type="Pfam" id="PF00861">
    <property type="entry name" value="Ribosomal_L18p"/>
    <property type="match status" value="1"/>
</dbReference>
<dbReference type="SUPFAM" id="SSF53137">
    <property type="entry name" value="Translational machinery components"/>
    <property type="match status" value="1"/>
</dbReference>
<sequence>MASQQGLQERRRQRLRFQLRRKSGGRPRLSVFRSSKHIHAQIIDDAQGRTLASASTLEKTLRDAGKTGADVSAATVIGKLIAERGVAAGVKTVVFDRGSYLYHGRVKALAEAAREGGLSF</sequence>
<comment type="function">
    <text evidence="1">This is one of the proteins that bind and probably mediate the attachment of the 5S RNA into the large ribosomal subunit, where it forms part of the central protuberance.</text>
</comment>
<comment type="subunit">
    <text evidence="1">Part of the 50S ribosomal subunit; part of the 5S rRNA/L5/L18/L25 subcomplex. Contacts the 5S and 23S rRNAs.</text>
</comment>
<comment type="similarity">
    <text evidence="1">Belongs to the universal ribosomal protein uL18 family.</text>
</comment>
<name>RL18_GLUOX</name>
<keyword id="KW-1185">Reference proteome</keyword>
<keyword id="KW-0687">Ribonucleoprotein</keyword>
<keyword id="KW-0689">Ribosomal protein</keyword>
<keyword id="KW-0694">RNA-binding</keyword>
<keyword id="KW-0699">rRNA-binding</keyword>
<organism>
    <name type="scientific">Gluconobacter oxydans (strain 621H)</name>
    <name type="common">Gluconobacter suboxydans</name>
    <dbReference type="NCBI Taxonomy" id="290633"/>
    <lineage>
        <taxon>Bacteria</taxon>
        <taxon>Pseudomonadati</taxon>
        <taxon>Pseudomonadota</taxon>
        <taxon>Alphaproteobacteria</taxon>
        <taxon>Acetobacterales</taxon>
        <taxon>Acetobacteraceae</taxon>
        <taxon>Gluconobacter</taxon>
    </lineage>
</organism>
<feature type="chain" id="PRO_0000131270" description="Large ribosomal subunit protein uL18">
    <location>
        <begin position="1"/>
        <end position="120"/>
    </location>
</feature>
<proteinExistence type="inferred from homology"/>